<proteinExistence type="evidence at transcript level"/>
<evidence type="ECO:0000250" key="1">
    <source>
        <dbReference type="UniProtKB" id="O95707"/>
    </source>
</evidence>
<evidence type="ECO:0000305" key="2"/>
<comment type="function">
    <text evidence="1">Component of ribonuclease P, a ribonucleoprotein complex that generates mature tRNA molecules by cleaving their 5'-ends.</text>
</comment>
<comment type="subunit">
    <text evidence="1">Component of nuclear RNase P and RNase MRP ribonucleoproteins. RNase P consists of a catalytic RNA moiety and 10 different protein chains; POP1, POP4, POP5, POP7, RPP14, RPP21, RPP25, RPP30, RPP38 and RPP40. Within the RNase P complex, POP1, POP7 and RPP25 form the 'finger' subcomplex, POP5, RPP14, RPP40 and homodimeric RPP30 form the 'palm' subcomplex, and RPP21, POP4 and RPP38 form the 'wrist' subcomplex. All subunits of the RNase P complex interact with the catalytic RNA. Several subunits of RNase P are also part of the RNase MRP complex. RNase MRP consists of a catalytic RNA moiety and about 8 protein subunits; POP1, POP7, RPP25, RPP30, RPP38, RPP40 and possibly also POP4 and POP5.</text>
</comment>
<comment type="subcellular location">
    <subcellularLocation>
        <location evidence="1">Nucleus</location>
        <location evidence="1">Nucleolus</location>
    </subcellularLocation>
</comment>
<comment type="similarity">
    <text evidence="2">Belongs to the eukaryotic/archaeal RNase P protein component 1 family.</text>
</comment>
<dbReference type="EMBL" id="BC088183">
    <property type="protein sequence ID" value="AAH88183.1"/>
    <property type="molecule type" value="mRNA"/>
</dbReference>
<dbReference type="RefSeq" id="NP_001009642.1">
    <property type="nucleotide sequence ID" value="NM_001009642.1"/>
</dbReference>
<dbReference type="SMR" id="Q5M882"/>
<dbReference type="FunCoup" id="Q5M882">
    <property type="interactions" value="2318"/>
</dbReference>
<dbReference type="IntAct" id="Q5M882">
    <property type="interactions" value="1"/>
</dbReference>
<dbReference type="STRING" id="10116.ENSRNOP00000020474"/>
<dbReference type="PhosphoSitePlus" id="Q5M882"/>
<dbReference type="PaxDb" id="10116-ENSRNOP00000020474"/>
<dbReference type="Ensembl" id="ENSRNOT00000020474.6">
    <property type="protein sequence ID" value="ENSRNOP00000020474.4"/>
    <property type="gene ID" value="ENSRNOG00000027646.5"/>
</dbReference>
<dbReference type="GeneID" id="292831"/>
<dbReference type="KEGG" id="rno:292831"/>
<dbReference type="UCSC" id="RGD:1305955">
    <property type="organism name" value="rat"/>
</dbReference>
<dbReference type="AGR" id="RGD:1305955"/>
<dbReference type="CTD" id="10775"/>
<dbReference type="RGD" id="1305955">
    <property type="gene designation" value="Pop4"/>
</dbReference>
<dbReference type="eggNOG" id="KOG4046">
    <property type="taxonomic scope" value="Eukaryota"/>
</dbReference>
<dbReference type="GeneTree" id="ENSGT00390000010067"/>
<dbReference type="HOGENOM" id="CLU_078577_2_1_1"/>
<dbReference type="InParanoid" id="Q5M882"/>
<dbReference type="OrthoDB" id="124041at2759"/>
<dbReference type="PhylomeDB" id="Q5M882"/>
<dbReference type="TreeFam" id="TF313883"/>
<dbReference type="PRO" id="PR:Q5M882"/>
<dbReference type="Proteomes" id="UP000002494">
    <property type="component" value="Chromosome 1"/>
</dbReference>
<dbReference type="Bgee" id="ENSRNOG00000027646">
    <property type="expression patterns" value="Expressed in ovary and 20 other cell types or tissues"/>
</dbReference>
<dbReference type="GO" id="GO:0030681">
    <property type="term" value="C:multimeric ribonuclease P complex"/>
    <property type="evidence" value="ECO:0000250"/>
    <property type="project" value="UniProtKB"/>
</dbReference>
<dbReference type="GO" id="GO:0005730">
    <property type="term" value="C:nucleolus"/>
    <property type="evidence" value="ECO:0007669"/>
    <property type="project" value="UniProtKB-SubCell"/>
</dbReference>
<dbReference type="GO" id="GO:0000172">
    <property type="term" value="C:ribonuclease MRP complex"/>
    <property type="evidence" value="ECO:0000318"/>
    <property type="project" value="GO_Central"/>
</dbReference>
<dbReference type="GO" id="GO:0030677">
    <property type="term" value="C:ribonuclease P complex"/>
    <property type="evidence" value="ECO:0000318"/>
    <property type="project" value="GO_Central"/>
</dbReference>
<dbReference type="GO" id="GO:0004526">
    <property type="term" value="F:ribonuclease P activity"/>
    <property type="evidence" value="ECO:0007669"/>
    <property type="project" value="UniProtKB-EC"/>
</dbReference>
<dbReference type="GO" id="GO:0033204">
    <property type="term" value="F:ribonuclease P RNA binding"/>
    <property type="evidence" value="ECO:0000250"/>
    <property type="project" value="UniProtKB"/>
</dbReference>
<dbReference type="GO" id="GO:0006364">
    <property type="term" value="P:rRNA processing"/>
    <property type="evidence" value="ECO:0000318"/>
    <property type="project" value="GO_Central"/>
</dbReference>
<dbReference type="GO" id="GO:0001682">
    <property type="term" value="P:tRNA 5'-leader removal"/>
    <property type="evidence" value="ECO:0000250"/>
    <property type="project" value="UniProtKB"/>
</dbReference>
<dbReference type="FunFam" id="2.30.30.210:FF:000001">
    <property type="entry name" value="Ribonuclease P protein subunit p29"/>
    <property type="match status" value="1"/>
</dbReference>
<dbReference type="Gene3D" id="2.30.30.210">
    <property type="entry name" value="Ribonuclease P/MRP, subunit p29"/>
    <property type="match status" value="1"/>
</dbReference>
<dbReference type="InterPro" id="IPR016848">
    <property type="entry name" value="RNase_P/MRP_Rpp29-subunit"/>
</dbReference>
<dbReference type="InterPro" id="IPR036980">
    <property type="entry name" value="RNase_P/MRP_Rpp29_sf"/>
</dbReference>
<dbReference type="InterPro" id="IPR023534">
    <property type="entry name" value="Rof/RNase_P-like"/>
</dbReference>
<dbReference type="InterPro" id="IPR002730">
    <property type="entry name" value="Rpp29/RNP1"/>
</dbReference>
<dbReference type="PANTHER" id="PTHR13348:SF0">
    <property type="entry name" value="RIBONUCLEASE P PROTEIN SUBUNIT P29"/>
    <property type="match status" value="1"/>
</dbReference>
<dbReference type="PANTHER" id="PTHR13348">
    <property type="entry name" value="RIBONUCLEASE P SUBUNIT P29"/>
    <property type="match status" value="1"/>
</dbReference>
<dbReference type="Pfam" id="PF01868">
    <property type="entry name" value="RNase_P-MRP_p29"/>
    <property type="match status" value="1"/>
</dbReference>
<dbReference type="PIRSF" id="PIRSF027081">
    <property type="entry name" value="RNase_P/MRP_p29_subunit"/>
    <property type="match status" value="1"/>
</dbReference>
<dbReference type="SMART" id="SM00538">
    <property type="entry name" value="POP4"/>
    <property type="match status" value="1"/>
</dbReference>
<dbReference type="SUPFAM" id="SSF101744">
    <property type="entry name" value="Rof/RNase P subunit-like"/>
    <property type="match status" value="1"/>
</dbReference>
<sequence length="221" mass="25633">MKAVIYHAFSHKEAKDHDVQELGTQRAEAFVRAFLKQSIPHMSQQDCESHLQRKAVILEYFTRLKPKPRPKKKSKGLSAKQRRELRLFDIKPEQQRYSLFLPLHELWKQYIRDLCNGLKPDTQPQMIQAKLLKADLHGAVISVTKSKCPSYVGVTGILLQETKHVFKIITKEDHLKVIPKQNCVFTIEIDDFISYIYGSKFQLRASERSAKKFKAKGTIDL</sequence>
<reference key="1">
    <citation type="journal article" date="2004" name="Genome Res.">
        <title>The status, quality, and expansion of the NIH full-length cDNA project: the Mammalian Gene Collection (MGC).</title>
        <authorList>
            <consortium name="The MGC Project Team"/>
        </authorList>
    </citation>
    <scope>NUCLEOTIDE SEQUENCE [LARGE SCALE MRNA]</scope>
    <source>
        <tissue>Spleen</tissue>
    </source>
</reference>
<gene>
    <name type="primary">Pop4</name>
    <name type="synonym">Rpp29</name>
</gene>
<name>RPP29_RAT</name>
<keyword id="KW-0539">Nucleus</keyword>
<keyword id="KW-0597">Phosphoprotein</keyword>
<keyword id="KW-1185">Reference proteome</keyword>
<keyword id="KW-0819">tRNA processing</keyword>
<protein>
    <recommendedName>
        <fullName>Ribonuclease P protein subunit p29</fullName>
    </recommendedName>
</protein>
<accession>Q5M882</accession>
<organism>
    <name type="scientific">Rattus norvegicus</name>
    <name type="common">Rat</name>
    <dbReference type="NCBI Taxonomy" id="10116"/>
    <lineage>
        <taxon>Eukaryota</taxon>
        <taxon>Metazoa</taxon>
        <taxon>Chordata</taxon>
        <taxon>Craniata</taxon>
        <taxon>Vertebrata</taxon>
        <taxon>Euteleostomi</taxon>
        <taxon>Mammalia</taxon>
        <taxon>Eutheria</taxon>
        <taxon>Euarchontoglires</taxon>
        <taxon>Glires</taxon>
        <taxon>Rodentia</taxon>
        <taxon>Myomorpha</taxon>
        <taxon>Muroidea</taxon>
        <taxon>Muridae</taxon>
        <taxon>Murinae</taxon>
        <taxon>Rattus</taxon>
    </lineage>
</organism>
<feature type="chain" id="PRO_0000128421" description="Ribonuclease P protein subunit p29">
    <location>
        <begin position="1"/>
        <end position="221"/>
    </location>
</feature>
<feature type="modified residue" description="Phosphoserine" evidence="1">
    <location>
        <position position="10"/>
    </location>
</feature>